<accession>A0LRN7</accession>
<gene>
    <name evidence="1" type="primary">rpsE</name>
    <name type="ordered locus">Acel_0323</name>
</gene>
<organism>
    <name type="scientific">Acidothermus cellulolyticus (strain ATCC 43068 / DSM 8971 / 11B)</name>
    <dbReference type="NCBI Taxonomy" id="351607"/>
    <lineage>
        <taxon>Bacteria</taxon>
        <taxon>Bacillati</taxon>
        <taxon>Actinomycetota</taxon>
        <taxon>Actinomycetes</taxon>
        <taxon>Acidothermales</taxon>
        <taxon>Acidothermaceae</taxon>
        <taxon>Acidothermus</taxon>
    </lineage>
</organism>
<evidence type="ECO:0000255" key="1">
    <source>
        <dbReference type="HAMAP-Rule" id="MF_01307"/>
    </source>
</evidence>
<evidence type="ECO:0000256" key="2">
    <source>
        <dbReference type="SAM" id="MobiDB-lite"/>
    </source>
</evidence>
<evidence type="ECO:0000305" key="3"/>
<proteinExistence type="inferred from homology"/>
<keyword id="KW-1185">Reference proteome</keyword>
<keyword id="KW-0687">Ribonucleoprotein</keyword>
<keyword id="KW-0689">Ribosomal protein</keyword>
<keyword id="KW-0694">RNA-binding</keyword>
<keyword id="KW-0699">rRNA-binding</keyword>
<protein>
    <recommendedName>
        <fullName evidence="1">Small ribosomal subunit protein uS5</fullName>
    </recommendedName>
    <alternativeName>
        <fullName evidence="3">30S ribosomal protein S5</fullName>
    </alternativeName>
</protein>
<dbReference type="EMBL" id="CP000481">
    <property type="protein sequence ID" value="ABK52097.1"/>
    <property type="molecule type" value="Genomic_DNA"/>
</dbReference>
<dbReference type="RefSeq" id="WP_011719160.1">
    <property type="nucleotide sequence ID" value="NC_008578.1"/>
</dbReference>
<dbReference type="SMR" id="A0LRN7"/>
<dbReference type="FunCoup" id="A0LRN7">
    <property type="interactions" value="360"/>
</dbReference>
<dbReference type="STRING" id="351607.Acel_0323"/>
<dbReference type="KEGG" id="ace:Acel_0323"/>
<dbReference type="eggNOG" id="COG0098">
    <property type="taxonomic scope" value="Bacteria"/>
</dbReference>
<dbReference type="HOGENOM" id="CLU_065898_2_2_11"/>
<dbReference type="InParanoid" id="A0LRN7"/>
<dbReference type="OrthoDB" id="9809045at2"/>
<dbReference type="Proteomes" id="UP000008221">
    <property type="component" value="Chromosome"/>
</dbReference>
<dbReference type="GO" id="GO:0015935">
    <property type="term" value="C:small ribosomal subunit"/>
    <property type="evidence" value="ECO:0007669"/>
    <property type="project" value="InterPro"/>
</dbReference>
<dbReference type="GO" id="GO:0019843">
    <property type="term" value="F:rRNA binding"/>
    <property type="evidence" value="ECO:0007669"/>
    <property type="project" value="UniProtKB-UniRule"/>
</dbReference>
<dbReference type="GO" id="GO:0003735">
    <property type="term" value="F:structural constituent of ribosome"/>
    <property type="evidence" value="ECO:0007669"/>
    <property type="project" value="InterPro"/>
</dbReference>
<dbReference type="GO" id="GO:0006412">
    <property type="term" value="P:translation"/>
    <property type="evidence" value="ECO:0007669"/>
    <property type="project" value="UniProtKB-UniRule"/>
</dbReference>
<dbReference type="FunFam" id="3.30.160.20:FF:000001">
    <property type="entry name" value="30S ribosomal protein S5"/>
    <property type="match status" value="1"/>
</dbReference>
<dbReference type="FunFam" id="3.30.230.10:FF:000002">
    <property type="entry name" value="30S ribosomal protein S5"/>
    <property type="match status" value="1"/>
</dbReference>
<dbReference type="Gene3D" id="3.30.160.20">
    <property type="match status" value="1"/>
</dbReference>
<dbReference type="Gene3D" id="3.30.230.10">
    <property type="match status" value="1"/>
</dbReference>
<dbReference type="HAMAP" id="MF_01307_B">
    <property type="entry name" value="Ribosomal_uS5_B"/>
    <property type="match status" value="1"/>
</dbReference>
<dbReference type="InterPro" id="IPR020568">
    <property type="entry name" value="Ribosomal_Su5_D2-typ_SF"/>
</dbReference>
<dbReference type="InterPro" id="IPR000851">
    <property type="entry name" value="Ribosomal_uS5"/>
</dbReference>
<dbReference type="InterPro" id="IPR005712">
    <property type="entry name" value="Ribosomal_uS5_bac-type"/>
</dbReference>
<dbReference type="InterPro" id="IPR005324">
    <property type="entry name" value="Ribosomal_uS5_C"/>
</dbReference>
<dbReference type="InterPro" id="IPR013810">
    <property type="entry name" value="Ribosomal_uS5_N"/>
</dbReference>
<dbReference type="InterPro" id="IPR018192">
    <property type="entry name" value="Ribosomal_uS5_N_CS"/>
</dbReference>
<dbReference type="InterPro" id="IPR014721">
    <property type="entry name" value="Ribsml_uS5_D2-typ_fold_subgr"/>
</dbReference>
<dbReference type="NCBIfam" id="TIGR01021">
    <property type="entry name" value="rpsE_bact"/>
    <property type="match status" value="1"/>
</dbReference>
<dbReference type="PANTHER" id="PTHR48277">
    <property type="entry name" value="MITOCHONDRIAL RIBOSOMAL PROTEIN S5"/>
    <property type="match status" value="1"/>
</dbReference>
<dbReference type="PANTHER" id="PTHR48277:SF1">
    <property type="entry name" value="MITOCHONDRIAL RIBOSOMAL PROTEIN S5"/>
    <property type="match status" value="1"/>
</dbReference>
<dbReference type="Pfam" id="PF00333">
    <property type="entry name" value="Ribosomal_S5"/>
    <property type="match status" value="1"/>
</dbReference>
<dbReference type="Pfam" id="PF03719">
    <property type="entry name" value="Ribosomal_S5_C"/>
    <property type="match status" value="1"/>
</dbReference>
<dbReference type="SUPFAM" id="SSF54768">
    <property type="entry name" value="dsRNA-binding domain-like"/>
    <property type="match status" value="1"/>
</dbReference>
<dbReference type="SUPFAM" id="SSF54211">
    <property type="entry name" value="Ribosomal protein S5 domain 2-like"/>
    <property type="match status" value="1"/>
</dbReference>
<dbReference type="PROSITE" id="PS00585">
    <property type="entry name" value="RIBOSOMAL_S5"/>
    <property type="match status" value="1"/>
</dbReference>
<dbReference type="PROSITE" id="PS50881">
    <property type="entry name" value="S5_DSRBD"/>
    <property type="match status" value="1"/>
</dbReference>
<sequence>MATAGRRGGAASERRERRESRRQEASPEKSNFLERVVTINRVAKVVKGGRRFSFTALVVVGDGNGMVGVGYGKAREVPAAIAKGVEEAKKHFFTVPRVQGTIPHPVIGEAAAGVVLLRPASPGTGVIAGGPVRAVLECAGVRDVLSKSLGSDNAVNIVHATVKALRALVPPEKVAVRRGLPLEEVAPPALLRAKAEAGV</sequence>
<reference key="1">
    <citation type="journal article" date="2009" name="Genome Res.">
        <title>Complete genome of the cellulolytic thermophile Acidothermus cellulolyticus 11B provides insights into its ecophysiological and evolutionary adaptations.</title>
        <authorList>
            <person name="Barabote R.D."/>
            <person name="Xie G."/>
            <person name="Leu D.H."/>
            <person name="Normand P."/>
            <person name="Necsulea A."/>
            <person name="Daubin V."/>
            <person name="Medigue C."/>
            <person name="Adney W.S."/>
            <person name="Xu X.C."/>
            <person name="Lapidus A."/>
            <person name="Parales R.E."/>
            <person name="Detter C."/>
            <person name="Pujic P."/>
            <person name="Bruce D."/>
            <person name="Lavire C."/>
            <person name="Challacombe J.F."/>
            <person name="Brettin T.S."/>
            <person name="Berry A.M."/>
        </authorList>
    </citation>
    <scope>NUCLEOTIDE SEQUENCE [LARGE SCALE GENOMIC DNA]</scope>
    <source>
        <strain>ATCC 43068 / DSM 8971 / 11B</strain>
    </source>
</reference>
<feature type="chain" id="PRO_0000323051" description="Small ribosomal subunit protein uS5">
    <location>
        <begin position="1"/>
        <end position="199"/>
    </location>
</feature>
<feature type="domain" description="S5 DRBM" evidence="1">
    <location>
        <begin position="32"/>
        <end position="95"/>
    </location>
</feature>
<feature type="region of interest" description="Disordered" evidence="2">
    <location>
        <begin position="1"/>
        <end position="29"/>
    </location>
</feature>
<feature type="compositionally biased region" description="Basic and acidic residues" evidence="2">
    <location>
        <begin position="12"/>
        <end position="27"/>
    </location>
</feature>
<name>RS5_ACIC1</name>
<comment type="function">
    <text evidence="1">With S4 and S12 plays an important role in translational accuracy.</text>
</comment>
<comment type="function">
    <text evidence="1">Located at the back of the 30S subunit body where it stabilizes the conformation of the head with respect to the body.</text>
</comment>
<comment type="subunit">
    <text evidence="1">Part of the 30S ribosomal subunit. Contacts proteins S4 and S8.</text>
</comment>
<comment type="domain">
    <text>The N-terminal domain interacts with the head of the 30S subunit; the C-terminal domain interacts with the body and contacts protein S4. The interaction surface between S4 and S5 is involved in control of translational fidelity.</text>
</comment>
<comment type="similarity">
    <text evidence="1">Belongs to the universal ribosomal protein uS5 family.</text>
</comment>